<evidence type="ECO:0000250" key="1"/>
<evidence type="ECO:0000250" key="2">
    <source>
        <dbReference type="UniProtKB" id="P40855"/>
    </source>
</evidence>
<evidence type="ECO:0000250" key="3">
    <source>
        <dbReference type="UniProtKB" id="Q8VCI5"/>
    </source>
</evidence>
<evidence type="ECO:0000256" key="4">
    <source>
        <dbReference type="SAM" id="MobiDB-lite"/>
    </source>
</evidence>
<evidence type="ECO:0000305" key="5"/>
<evidence type="ECO:0007744" key="6">
    <source>
    </source>
</evidence>
<keyword id="KW-0007">Acetylation</keyword>
<keyword id="KW-0963">Cytoplasm</keyword>
<keyword id="KW-0449">Lipoprotein</keyword>
<keyword id="KW-0472">Membrane</keyword>
<keyword id="KW-0488">Methylation</keyword>
<keyword id="KW-0576">Peroxisome</keyword>
<keyword id="KW-0962">Peroxisome biogenesis</keyword>
<keyword id="KW-0597">Phosphoprotein</keyword>
<keyword id="KW-0636">Prenylation</keyword>
<keyword id="KW-1185">Reference proteome</keyword>
<proteinExistence type="evidence at protein level"/>
<comment type="function">
    <text evidence="2">Necessary for early peroxisomal biogenesis. Acts both as a cytosolic chaperone and as an import receptor for peroxisomal membrane proteins (PMPs). Binds and stabilizes newly synthesized PMPs in the cytoplasm by interacting with their hydrophobic membrane-spanning domains, and targets them to the peroxisome membrane by binding to the integral membrane protein PEX3. Excludes CDKN2A from the nucleus and prevents its interaction with MDM2, which results in active degradation of TP53.</text>
</comment>
<comment type="subunit">
    <text evidence="1">Interacts with a broad range of peroxisomal membrane proteins, including PEX3, PEX10, PEX11A, PEX11B, PEX12, PEX13, PEX14 and PEX16, PXMP2/PMP22, PXMP4/PMP24, SLC25A17/PMP34, ABCD1/ALDP, ABCD2/ALDRP, and ABCD3/PMP70. Also interacts with the tumor suppressor CDKN2A/p19ARF (By similarity).</text>
</comment>
<comment type="subcellular location">
    <subcellularLocation>
        <location evidence="2">Cytoplasm</location>
    </subcellularLocation>
    <subcellularLocation>
        <location evidence="2">Peroxisome membrane</location>
        <topology evidence="2">Lipid-anchor</topology>
        <orientation evidence="2">Cytoplasmic side</orientation>
    </subcellularLocation>
    <text evidence="2">Mainly cytoplasmic, some fraction membrane-associated to the outer surface of peroxisomes.</text>
</comment>
<comment type="similarity">
    <text evidence="5">Belongs to the peroxin-19 family.</text>
</comment>
<feature type="initiator methionine" description="Removed" evidence="2">
    <location>
        <position position="1"/>
    </location>
</feature>
<feature type="chain" id="PRO_0000218761" description="Peroxisomal biogenesis factor 19">
    <location>
        <begin position="2"/>
        <end position="296"/>
    </location>
</feature>
<feature type="propeptide" id="PRO_0000396703" description="Removed in mature form" evidence="1">
    <location>
        <begin position="297"/>
        <end position="299"/>
    </location>
</feature>
<feature type="region of interest" description="Necessary for PEX19 function on peroxisome biogenesis" evidence="1">
    <location>
        <begin position="2"/>
        <end position="91"/>
    </location>
</feature>
<feature type="region of interest" description="Docking to the peroxisome membrane and binding to PEX3" evidence="1">
    <location>
        <begin position="2"/>
        <end position="56"/>
    </location>
</feature>
<feature type="region of interest" description="Disordered" evidence="4">
    <location>
        <begin position="25"/>
        <end position="63"/>
    </location>
</feature>
<feature type="modified residue" description="N-acetylalanine" evidence="2">
    <location>
        <position position="2"/>
    </location>
</feature>
<feature type="modified residue" description="Phosphoserine" evidence="6">
    <location>
        <position position="35"/>
    </location>
</feature>
<feature type="modified residue" description="Phosphoserine" evidence="6">
    <location>
        <position position="39"/>
    </location>
</feature>
<feature type="modified residue" description="Phosphoserine" evidence="2">
    <location>
        <position position="54"/>
    </location>
</feature>
<feature type="modified residue" description="Phosphoserine" evidence="6">
    <location>
        <position position="66"/>
    </location>
</feature>
<feature type="modified residue" description="Phosphothreonine" evidence="3">
    <location>
        <position position="236"/>
    </location>
</feature>
<feature type="modified residue" description="Cysteine methyl ester" evidence="1">
    <location>
        <position position="296"/>
    </location>
</feature>
<feature type="lipid moiety-binding region" description="S-farnesyl cysteine" evidence="1">
    <location>
        <position position="296"/>
    </location>
</feature>
<sequence>MAAAEGGCGAGVEADRELEELLESALDDFDKAKPSPAPSPTISAPDASGPQKRSPGDTAKDALFASQEKFFQELFDSELASQATAEFEKAMKELAEEEPHLVEQFQKLSEAAGRVGSDASSQQEFTSCLKETLSGLAKNATDLQNSGMSEEELTKAMEGLGMDEGDGEGNILPIMQSLMQNLLSKDVLYPSLKEITEKYPEWLQSHQESIPPEQFEKYQQQHSVMGKICEQFEAETPTDSEATHRARFEAVLDLMQQLQDLGHPPKELAGEMPPGLNFDLDALNLSGPPGANGEQCLIM</sequence>
<gene>
    <name type="primary">Pex19</name>
    <name type="synonym">Pxf</name>
</gene>
<accession>Q9QYU1</accession>
<organism>
    <name type="scientific">Rattus norvegicus</name>
    <name type="common">Rat</name>
    <dbReference type="NCBI Taxonomy" id="10116"/>
    <lineage>
        <taxon>Eukaryota</taxon>
        <taxon>Metazoa</taxon>
        <taxon>Chordata</taxon>
        <taxon>Craniata</taxon>
        <taxon>Vertebrata</taxon>
        <taxon>Euteleostomi</taxon>
        <taxon>Mammalia</taxon>
        <taxon>Eutheria</taxon>
        <taxon>Euarchontoglires</taxon>
        <taxon>Glires</taxon>
        <taxon>Rodentia</taxon>
        <taxon>Myomorpha</taxon>
        <taxon>Muroidea</taxon>
        <taxon>Muridae</taxon>
        <taxon>Murinae</taxon>
        <taxon>Rattus</taxon>
    </lineage>
</organism>
<reference key="1">
    <citation type="submission" date="1996-10" db="EMBL/GenBank/DDBJ databases">
        <authorList>
            <person name="Kammerer S."/>
        </authorList>
    </citation>
    <scope>NUCLEOTIDE SEQUENCE [MRNA]</scope>
</reference>
<reference key="2">
    <citation type="journal article" date="2012" name="Nat. Commun.">
        <title>Quantitative maps of protein phosphorylation sites across 14 different rat organs and tissues.</title>
        <authorList>
            <person name="Lundby A."/>
            <person name="Secher A."/>
            <person name="Lage K."/>
            <person name="Nordsborg N.B."/>
            <person name="Dmytriyev A."/>
            <person name="Lundby C."/>
            <person name="Olsen J.V."/>
        </authorList>
    </citation>
    <scope>PHOSPHORYLATION [LARGE SCALE ANALYSIS] AT SER-35; SER-39 AND SER-66</scope>
    <scope>IDENTIFICATION BY MASS SPECTROMETRY [LARGE SCALE ANALYSIS]</scope>
</reference>
<dbReference type="EMBL" id="Y09049">
    <property type="protein sequence ID" value="CAA70258.1"/>
    <property type="molecule type" value="mRNA"/>
</dbReference>
<dbReference type="SMR" id="Q9QYU1"/>
<dbReference type="FunCoup" id="Q9QYU1">
    <property type="interactions" value="2582"/>
</dbReference>
<dbReference type="STRING" id="10116.ENSRNOP00000032453"/>
<dbReference type="GlyGen" id="Q9QYU1">
    <property type="glycosylation" value="1 site"/>
</dbReference>
<dbReference type="iPTMnet" id="Q9QYU1"/>
<dbReference type="PhosphoSitePlus" id="Q9QYU1"/>
<dbReference type="jPOST" id="Q9QYU1"/>
<dbReference type="PaxDb" id="10116-ENSRNOP00000032453"/>
<dbReference type="UCSC" id="RGD:1306913">
    <property type="organism name" value="rat"/>
</dbReference>
<dbReference type="AGR" id="RGD:1306913"/>
<dbReference type="RGD" id="1306913">
    <property type="gene designation" value="Pex19"/>
</dbReference>
<dbReference type="eggNOG" id="KOG3133">
    <property type="taxonomic scope" value="Eukaryota"/>
</dbReference>
<dbReference type="InParanoid" id="Q9QYU1"/>
<dbReference type="OrthoDB" id="21292at2759"/>
<dbReference type="PhylomeDB" id="Q9QYU1"/>
<dbReference type="Reactome" id="R-RNO-1369062">
    <property type="pathway name" value="ABC transporters in lipid homeostasis"/>
</dbReference>
<dbReference type="Reactome" id="R-RNO-9603798">
    <property type="pathway name" value="Class I peroxisomal membrane protein import"/>
</dbReference>
<dbReference type="PRO" id="PR:Q9QYU1"/>
<dbReference type="Proteomes" id="UP000002494">
    <property type="component" value="Unplaced"/>
</dbReference>
<dbReference type="GO" id="GO:0031526">
    <property type="term" value="C:brush border membrane"/>
    <property type="evidence" value="ECO:0000314"/>
    <property type="project" value="RGD"/>
</dbReference>
<dbReference type="GO" id="GO:0005737">
    <property type="term" value="C:cytoplasm"/>
    <property type="evidence" value="ECO:0000314"/>
    <property type="project" value="UniProtKB"/>
</dbReference>
<dbReference type="GO" id="GO:0005829">
    <property type="term" value="C:cytosol"/>
    <property type="evidence" value="ECO:0000266"/>
    <property type="project" value="RGD"/>
</dbReference>
<dbReference type="GO" id="GO:0005778">
    <property type="term" value="C:peroxisomal membrane"/>
    <property type="evidence" value="ECO:0000266"/>
    <property type="project" value="RGD"/>
</dbReference>
<dbReference type="GO" id="GO:0005777">
    <property type="term" value="C:peroxisome"/>
    <property type="evidence" value="ECO:0000314"/>
    <property type="project" value="UniProtKB"/>
</dbReference>
<dbReference type="GO" id="GO:0032991">
    <property type="term" value="C:protein-containing complex"/>
    <property type="evidence" value="ECO:0000266"/>
    <property type="project" value="RGD"/>
</dbReference>
<dbReference type="GO" id="GO:0051117">
    <property type="term" value="F:ATPase binding"/>
    <property type="evidence" value="ECO:0000266"/>
    <property type="project" value="RGD"/>
</dbReference>
<dbReference type="GO" id="GO:0036105">
    <property type="term" value="F:peroxisome membrane class-1 targeting sequence binding"/>
    <property type="evidence" value="ECO:0000266"/>
    <property type="project" value="RGD"/>
</dbReference>
<dbReference type="GO" id="GO:0033328">
    <property type="term" value="F:peroxisome membrane targeting sequence binding"/>
    <property type="evidence" value="ECO:0000318"/>
    <property type="project" value="GO_Central"/>
</dbReference>
<dbReference type="GO" id="GO:0140597">
    <property type="term" value="F:protein carrier chaperone"/>
    <property type="evidence" value="ECO:0000266"/>
    <property type="project" value="RGD"/>
</dbReference>
<dbReference type="GO" id="GO:0061077">
    <property type="term" value="P:chaperone-mediated protein folding"/>
    <property type="evidence" value="ECO:0000266"/>
    <property type="project" value="RGD"/>
</dbReference>
<dbReference type="GO" id="GO:0072663">
    <property type="term" value="P:establishment of protein localization to peroxisome"/>
    <property type="evidence" value="ECO:0000266"/>
    <property type="project" value="RGD"/>
</dbReference>
<dbReference type="GO" id="GO:0016559">
    <property type="term" value="P:peroxisome fission"/>
    <property type="evidence" value="ECO:0000266"/>
    <property type="project" value="RGD"/>
</dbReference>
<dbReference type="GO" id="GO:0007031">
    <property type="term" value="P:peroxisome organization"/>
    <property type="evidence" value="ECO:0000266"/>
    <property type="project" value="RGD"/>
</dbReference>
<dbReference type="GO" id="GO:0045046">
    <property type="term" value="P:protein import into peroxisome membrane"/>
    <property type="evidence" value="ECO:0000266"/>
    <property type="project" value="RGD"/>
</dbReference>
<dbReference type="GO" id="GO:0050821">
    <property type="term" value="P:protein stabilization"/>
    <property type="evidence" value="ECO:0000266"/>
    <property type="project" value="RGD"/>
</dbReference>
<dbReference type="GO" id="GO:0006625">
    <property type="term" value="P:protein targeting to peroxisome"/>
    <property type="evidence" value="ECO:0000266"/>
    <property type="project" value="RGD"/>
</dbReference>
<dbReference type="FunFam" id="1.20.120.900:FF:000001">
    <property type="entry name" value="Putative peroxisomal biogenesis factor 19"/>
    <property type="match status" value="1"/>
</dbReference>
<dbReference type="Gene3D" id="1.20.120.900">
    <property type="entry name" value="Pex19, mPTS binding domain"/>
    <property type="match status" value="1"/>
</dbReference>
<dbReference type="InterPro" id="IPR006708">
    <property type="entry name" value="Pex19"/>
</dbReference>
<dbReference type="InterPro" id="IPR038322">
    <property type="entry name" value="Pex19_C_sf"/>
</dbReference>
<dbReference type="PANTHER" id="PTHR12774">
    <property type="entry name" value="PEROXISOMAL BIOGENESIS FACTOR 19"/>
    <property type="match status" value="1"/>
</dbReference>
<dbReference type="PANTHER" id="PTHR12774:SF2">
    <property type="entry name" value="PEROXISOMAL BIOGENESIS FACTOR 19"/>
    <property type="match status" value="1"/>
</dbReference>
<dbReference type="Pfam" id="PF04614">
    <property type="entry name" value="Pex19"/>
    <property type="match status" value="1"/>
</dbReference>
<protein>
    <recommendedName>
        <fullName>Peroxisomal biogenesis factor 19</fullName>
    </recommendedName>
    <alternativeName>
        <fullName>Peroxin-19</fullName>
    </alternativeName>
    <alternativeName>
        <fullName>Peroxisomal farnesylated protein</fullName>
    </alternativeName>
</protein>
<name>PEX19_RAT</name>